<sequence length="126" mass="14075">MKLLTANFLNCSNKKCTSSPEAFPLDVVDAKLAIQQLELKPEFLIGIMPRIDWNALLKTTRQLGNYSLPDEKPDLVDDSDEVLLKSLHNVLLETEITEGKMVCGNCGHVYPIFEGIPNMLLSESEI</sequence>
<dbReference type="EMBL" id="CU329670">
    <property type="protein sequence ID" value="CAA90460.1"/>
    <property type="molecule type" value="Genomic_DNA"/>
</dbReference>
<dbReference type="PIR" id="S58099">
    <property type="entry name" value="S58099"/>
</dbReference>
<dbReference type="RefSeq" id="NP_592914.1">
    <property type="nucleotide sequence ID" value="NM_001018315.2"/>
</dbReference>
<dbReference type="SMR" id="Q09723"/>
<dbReference type="BioGRID" id="278203">
    <property type="interactions" value="68"/>
</dbReference>
<dbReference type="FunCoup" id="Q09723">
    <property type="interactions" value="536"/>
</dbReference>
<dbReference type="STRING" id="284812.Q09723"/>
<dbReference type="iPTMnet" id="Q09723"/>
<dbReference type="PaxDb" id="4896-SPAC31A2.02.1"/>
<dbReference type="EnsemblFungi" id="SPAC31A2.02.1">
    <property type="protein sequence ID" value="SPAC31A2.02.1:pep"/>
    <property type="gene ID" value="SPAC31A2.02"/>
</dbReference>
<dbReference type="GeneID" id="2541708"/>
<dbReference type="KEGG" id="spo:2541708"/>
<dbReference type="PomBase" id="SPAC31A2.02">
    <property type="gene designation" value="trm112"/>
</dbReference>
<dbReference type="VEuPathDB" id="FungiDB:SPAC31A2.02"/>
<dbReference type="eggNOG" id="KOG1088">
    <property type="taxonomic scope" value="Eukaryota"/>
</dbReference>
<dbReference type="HOGENOM" id="CLU_086140_0_0_1"/>
<dbReference type="InParanoid" id="Q09723"/>
<dbReference type="OMA" id="NMLTSKC"/>
<dbReference type="PhylomeDB" id="Q09723"/>
<dbReference type="Reactome" id="R-SPO-156581">
    <property type="pathway name" value="Methylation"/>
</dbReference>
<dbReference type="Reactome" id="R-SPO-72764">
    <property type="pathway name" value="Eukaryotic Translation Termination"/>
</dbReference>
<dbReference type="PRO" id="PR:Q09723"/>
<dbReference type="Proteomes" id="UP000002485">
    <property type="component" value="Chromosome I"/>
</dbReference>
<dbReference type="GO" id="GO:0005737">
    <property type="term" value="C:cytoplasm"/>
    <property type="evidence" value="ECO:0000318"/>
    <property type="project" value="GO_Central"/>
</dbReference>
<dbReference type="GO" id="GO:0005829">
    <property type="term" value="C:cytosol"/>
    <property type="evidence" value="ECO:0007005"/>
    <property type="project" value="PomBase"/>
</dbReference>
<dbReference type="GO" id="GO:0035657">
    <property type="term" value="C:eRF1 methyltransferase complex"/>
    <property type="evidence" value="ECO:0000266"/>
    <property type="project" value="PomBase"/>
</dbReference>
<dbReference type="GO" id="GO:0005634">
    <property type="term" value="C:nucleus"/>
    <property type="evidence" value="ECO:0007005"/>
    <property type="project" value="PomBase"/>
</dbReference>
<dbReference type="GO" id="GO:0043528">
    <property type="term" value="C:tRNA (m2G10) methyltransferase complex"/>
    <property type="evidence" value="ECO:0000318"/>
    <property type="project" value="GO_Central"/>
</dbReference>
<dbReference type="GO" id="GO:0046982">
    <property type="term" value="F:protein heterodimerization activity"/>
    <property type="evidence" value="ECO:0007669"/>
    <property type="project" value="InterPro"/>
</dbReference>
<dbReference type="GO" id="GO:0141106">
    <property type="term" value="F:tRNA methyltransferase activator activity"/>
    <property type="evidence" value="ECO:0000318"/>
    <property type="project" value="GO_Central"/>
</dbReference>
<dbReference type="GO" id="GO:0000470">
    <property type="term" value="P:maturation of LSU-rRNA"/>
    <property type="evidence" value="ECO:0000318"/>
    <property type="project" value="GO_Central"/>
</dbReference>
<dbReference type="GO" id="GO:0030490">
    <property type="term" value="P:maturation of SSU-rRNA"/>
    <property type="evidence" value="ECO:0000318"/>
    <property type="project" value="GO_Central"/>
</dbReference>
<dbReference type="GO" id="GO:2000234">
    <property type="term" value="P:positive regulation of rRNA processing"/>
    <property type="evidence" value="ECO:0000318"/>
    <property type="project" value="GO_Central"/>
</dbReference>
<dbReference type="GO" id="GO:2000765">
    <property type="term" value="P:regulation of cytoplasmic translation"/>
    <property type="evidence" value="ECO:0000266"/>
    <property type="project" value="PomBase"/>
</dbReference>
<dbReference type="GO" id="GO:0030488">
    <property type="term" value="P:tRNA methylation"/>
    <property type="evidence" value="ECO:0000266"/>
    <property type="project" value="PomBase"/>
</dbReference>
<dbReference type="Gene3D" id="2.20.25.10">
    <property type="match status" value="1"/>
</dbReference>
<dbReference type="InterPro" id="IPR039127">
    <property type="entry name" value="Trm112"/>
</dbReference>
<dbReference type="InterPro" id="IPR005651">
    <property type="entry name" value="Trm112-like"/>
</dbReference>
<dbReference type="PANTHER" id="PTHR12773:SF0">
    <property type="entry name" value="MULTIFUNCTIONAL METHYLTRANSFERASE SUBUNIT TRM112-LIKE PROTEIN"/>
    <property type="match status" value="1"/>
</dbReference>
<dbReference type="PANTHER" id="PTHR12773">
    <property type="entry name" value="UPF0315 PROTEIN-RELATED"/>
    <property type="match status" value="1"/>
</dbReference>
<dbReference type="Pfam" id="PF03966">
    <property type="entry name" value="Trm112p"/>
    <property type="match status" value="1"/>
</dbReference>
<dbReference type="SUPFAM" id="SSF158997">
    <property type="entry name" value="Trm112p-like"/>
    <property type="match status" value="1"/>
</dbReference>
<organism>
    <name type="scientific">Schizosaccharomyces pombe (strain 972 / ATCC 24843)</name>
    <name type="common">Fission yeast</name>
    <dbReference type="NCBI Taxonomy" id="284812"/>
    <lineage>
        <taxon>Eukaryota</taxon>
        <taxon>Fungi</taxon>
        <taxon>Dikarya</taxon>
        <taxon>Ascomycota</taxon>
        <taxon>Taphrinomycotina</taxon>
        <taxon>Schizosaccharomycetes</taxon>
        <taxon>Schizosaccharomycetales</taxon>
        <taxon>Schizosaccharomycetaceae</taxon>
        <taxon>Schizosaccharomyces</taxon>
    </lineage>
</organism>
<reference key="1">
    <citation type="journal article" date="2002" name="Nature">
        <title>The genome sequence of Schizosaccharomyces pombe.</title>
        <authorList>
            <person name="Wood V."/>
            <person name="Gwilliam R."/>
            <person name="Rajandream M.A."/>
            <person name="Lyne M.H."/>
            <person name="Lyne R."/>
            <person name="Stewart A."/>
            <person name="Sgouros J.G."/>
            <person name="Peat N."/>
            <person name="Hayles J."/>
            <person name="Baker S.G."/>
            <person name="Basham D."/>
            <person name="Bowman S."/>
            <person name="Brooks K."/>
            <person name="Brown D."/>
            <person name="Brown S."/>
            <person name="Chillingworth T."/>
            <person name="Churcher C.M."/>
            <person name="Collins M."/>
            <person name="Connor R."/>
            <person name="Cronin A."/>
            <person name="Davis P."/>
            <person name="Feltwell T."/>
            <person name="Fraser A."/>
            <person name="Gentles S."/>
            <person name="Goble A."/>
            <person name="Hamlin N."/>
            <person name="Harris D.E."/>
            <person name="Hidalgo J."/>
            <person name="Hodgson G."/>
            <person name="Holroyd S."/>
            <person name="Hornsby T."/>
            <person name="Howarth S."/>
            <person name="Huckle E.J."/>
            <person name="Hunt S."/>
            <person name="Jagels K."/>
            <person name="James K.D."/>
            <person name="Jones L."/>
            <person name="Jones M."/>
            <person name="Leather S."/>
            <person name="McDonald S."/>
            <person name="McLean J."/>
            <person name="Mooney P."/>
            <person name="Moule S."/>
            <person name="Mungall K.L."/>
            <person name="Murphy L.D."/>
            <person name="Niblett D."/>
            <person name="Odell C."/>
            <person name="Oliver K."/>
            <person name="O'Neil S."/>
            <person name="Pearson D."/>
            <person name="Quail M.A."/>
            <person name="Rabbinowitsch E."/>
            <person name="Rutherford K.M."/>
            <person name="Rutter S."/>
            <person name="Saunders D."/>
            <person name="Seeger K."/>
            <person name="Sharp S."/>
            <person name="Skelton J."/>
            <person name="Simmonds M.N."/>
            <person name="Squares R."/>
            <person name="Squares S."/>
            <person name="Stevens K."/>
            <person name="Taylor K."/>
            <person name="Taylor R.G."/>
            <person name="Tivey A."/>
            <person name="Walsh S.V."/>
            <person name="Warren T."/>
            <person name="Whitehead S."/>
            <person name="Woodward J.R."/>
            <person name="Volckaert G."/>
            <person name="Aert R."/>
            <person name="Robben J."/>
            <person name="Grymonprez B."/>
            <person name="Weltjens I."/>
            <person name="Vanstreels E."/>
            <person name="Rieger M."/>
            <person name="Schaefer M."/>
            <person name="Mueller-Auer S."/>
            <person name="Gabel C."/>
            <person name="Fuchs M."/>
            <person name="Duesterhoeft A."/>
            <person name="Fritzc C."/>
            <person name="Holzer E."/>
            <person name="Moestl D."/>
            <person name="Hilbert H."/>
            <person name="Borzym K."/>
            <person name="Langer I."/>
            <person name="Beck A."/>
            <person name="Lehrach H."/>
            <person name="Reinhardt R."/>
            <person name="Pohl T.M."/>
            <person name="Eger P."/>
            <person name="Zimmermann W."/>
            <person name="Wedler H."/>
            <person name="Wambutt R."/>
            <person name="Purnelle B."/>
            <person name="Goffeau A."/>
            <person name="Cadieu E."/>
            <person name="Dreano S."/>
            <person name="Gloux S."/>
            <person name="Lelaure V."/>
            <person name="Mottier S."/>
            <person name="Galibert F."/>
            <person name="Aves S.J."/>
            <person name="Xiang Z."/>
            <person name="Hunt C."/>
            <person name="Moore K."/>
            <person name="Hurst S.M."/>
            <person name="Lucas M."/>
            <person name="Rochet M."/>
            <person name="Gaillardin C."/>
            <person name="Tallada V.A."/>
            <person name="Garzon A."/>
            <person name="Thode G."/>
            <person name="Daga R.R."/>
            <person name="Cruzado L."/>
            <person name="Jimenez J."/>
            <person name="Sanchez M."/>
            <person name="del Rey F."/>
            <person name="Benito J."/>
            <person name="Dominguez A."/>
            <person name="Revuelta J.L."/>
            <person name="Moreno S."/>
            <person name="Armstrong J."/>
            <person name="Forsburg S.L."/>
            <person name="Cerutti L."/>
            <person name="Lowe T."/>
            <person name="McCombie W.R."/>
            <person name="Paulsen I."/>
            <person name="Potashkin J."/>
            <person name="Shpakovski G.V."/>
            <person name="Ussery D."/>
            <person name="Barrell B.G."/>
            <person name="Nurse P."/>
        </authorList>
    </citation>
    <scope>NUCLEOTIDE SEQUENCE [LARGE SCALE GENOMIC DNA]</scope>
    <source>
        <strain>972 / ATCC 24843</strain>
    </source>
</reference>
<reference key="2">
    <citation type="journal article" date="2006" name="Nat. Biotechnol.">
        <title>ORFeome cloning and global analysis of protein localization in the fission yeast Schizosaccharomyces pombe.</title>
        <authorList>
            <person name="Matsuyama A."/>
            <person name="Arai R."/>
            <person name="Yashiroda Y."/>
            <person name="Shirai A."/>
            <person name="Kamata A."/>
            <person name="Sekido S."/>
            <person name="Kobayashi Y."/>
            <person name="Hashimoto A."/>
            <person name="Hamamoto M."/>
            <person name="Hiraoka Y."/>
            <person name="Horinouchi S."/>
            <person name="Yoshida M."/>
        </authorList>
    </citation>
    <scope>SUBCELLULAR LOCATION [LARGE SCALE ANALYSIS]</scope>
</reference>
<proteinExistence type="inferred from homology"/>
<gene>
    <name type="primary">trm112</name>
    <name type="ORF">SPAC31A2.02</name>
</gene>
<protein>
    <recommendedName>
        <fullName>Multifunctional methyltransferase subunit trm112</fullName>
    </recommendedName>
    <alternativeName>
        <fullName>eRF1 methyltransferase subunit trm112</fullName>
        <shortName>eRF1 MTase subunit trm112</shortName>
    </alternativeName>
    <alternativeName>
        <fullName>tRNA methyltransferase 112 homolog</fullName>
    </alternativeName>
</protein>
<feature type="chain" id="PRO_0000215804" description="Multifunctional methyltransferase subunit trm112">
    <location>
        <begin position="1"/>
        <end position="126"/>
    </location>
</feature>
<feature type="domain" description="TRM112">
    <location>
        <begin position="2"/>
        <end position="122"/>
    </location>
</feature>
<name>TR112_SCHPO</name>
<keyword id="KW-0963">Cytoplasm</keyword>
<keyword id="KW-0539">Nucleus</keyword>
<keyword id="KW-1185">Reference proteome</keyword>
<accession>Q09723</accession>
<evidence type="ECO:0000250" key="1">
    <source>
        <dbReference type="UniProtKB" id="P53738"/>
    </source>
</evidence>
<evidence type="ECO:0000269" key="2">
    <source>
    </source>
</evidence>
<evidence type="ECO:0000305" key="3"/>
<comment type="function">
    <text evidence="1">Acts as an activator of both rRNA/tRNA and protein methyltransferases. Together with methyltransferase mtq2, required for the methylation of eRF1 on 'Gln-182'. Together with methyltransferase trm11, required for the formation of 2-methylguanosine at position 10 (m2G10) in tRNA. Together with methyltransferase bud23, required for the formation of a 7-methylguanine in 18S rRNA. Involved in biogenesis of both 40S and 60S ribosomal subunits (By similarity).</text>
</comment>
<comment type="subunit">
    <text evidence="1">Heterodimer of mtq2-trm112, forming the eRF1 methyltransferase. Trm112 is necessary for the solubility and activity of the catalytic subunit mtq2. Interacts with trm11; required for full tRNA methyltransferase activity. Interacts with bud23; required for full rRNA methyltransferase activity. Interacts with rcm1, nop2, trm9 and lys9 (By similarity).</text>
</comment>
<comment type="subcellular location">
    <subcellularLocation>
        <location evidence="2">Cytoplasm</location>
    </subcellularLocation>
    <subcellularLocation>
        <location evidence="2">Nucleus</location>
    </subcellularLocation>
</comment>
<comment type="similarity">
    <text evidence="3">Belongs to the TRM112 family.</text>
</comment>